<protein>
    <recommendedName>
        <fullName>RB-associated KRAB zinc finger protein</fullName>
    </recommendedName>
    <alternativeName>
        <fullName>RB-associated KRAB repressor</fullName>
        <shortName>hRBaK</shortName>
    </alternativeName>
    <alternativeName>
        <fullName>Zinc finger protein 769</fullName>
    </alternativeName>
</protein>
<keyword id="KW-0010">Activator</keyword>
<keyword id="KW-0025">Alternative splicing</keyword>
<keyword id="KW-1017">Isopeptide bond</keyword>
<keyword id="KW-0479">Metal-binding</keyword>
<keyword id="KW-0539">Nucleus</keyword>
<keyword id="KW-1267">Proteomics identification</keyword>
<keyword id="KW-1185">Reference proteome</keyword>
<keyword id="KW-0677">Repeat</keyword>
<keyword id="KW-0678">Repressor</keyword>
<keyword id="KW-0804">Transcription</keyword>
<keyword id="KW-0805">Transcription regulation</keyword>
<keyword id="KW-0832">Ubl conjugation</keyword>
<keyword id="KW-0862">Zinc</keyword>
<keyword id="KW-0863">Zinc-finger</keyword>
<proteinExistence type="evidence at protein level"/>
<evidence type="ECO:0000255" key="1">
    <source>
        <dbReference type="PROSITE-ProRule" id="PRU00042"/>
    </source>
</evidence>
<evidence type="ECO:0000255" key="2">
    <source>
        <dbReference type="PROSITE-ProRule" id="PRU00119"/>
    </source>
</evidence>
<evidence type="ECO:0000269" key="3">
    <source>
    </source>
</evidence>
<evidence type="ECO:0000269" key="4">
    <source>
    </source>
</evidence>
<evidence type="ECO:0000303" key="5">
    <source>
    </source>
</evidence>
<evidence type="ECO:0000305" key="6"/>
<evidence type="ECO:0007744" key="7">
    <source>
    </source>
</evidence>
<evidence type="ECO:0007744" key="8">
    <source>
    </source>
</evidence>
<evidence type="ECO:0007744" key="9">
    <source>
    </source>
</evidence>
<gene>
    <name type="primary">RBAK</name>
    <name type="synonym">ZNF769</name>
</gene>
<feature type="chain" id="PRO_0000316976" description="RB-associated KRAB zinc finger protein">
    <location>
        <begin position="1"/>
        <end position="714"/>
    </location>
</feature>
<feature type="domain" description="KRAB" evidence="2">
    <location>
        <begin position="8"/>
        <end position="79"/>
    </location>
</feature>
<feature type="zinc finger region" description="C2H2-type 1" evidence="1">
    <location>
        <begin position="261"/>
        <end position="283"/>
    </location>
</feature>
<feature type="zinc finger region" description="C2H2-type 2" evidence="1">
    <location>
        <begin position="289"/>
        <end position="311"/>
    </location>
</feature>
<feature type="zinc finger region" description="C2H2-type 3" evidence="1">
    <location>
        <begin position="317"/>
        <end position="339"/>
    </location>
</feature>
<feature type="zinc finger region" description="C2H2-type 4" evidence="1">
    <location>
        <begin position="345"/>
        <end position="367"/>
    </location>
</feature>
<feature type="zinc finger region" description="C2H2-type 5" evidence="1">
    <location>
        <begin position="373"/>
        <end position="395"/>
    </location>
</feature>
<feature type="zinc finger region" description="C2H2-type 6" evidence="1">
    <location>
        <begin position="401"/>
        <end position="423"/>
    </location>
</feature>
<feature type="zinc finger region" description="C2H2-type 7" evidence="1">
    <location>
        <begin position="429"/>
        <end position="451"/>
    </location>
</feature>
<feature type="zinc finger region" description="C2H2-type 8" evidence="1">
    <location>
        <begin position="457"/>
        <end position="479"/>
    </location>
</feature>
<feature type="zinc finger region" description="C2H2-type 9" evidence="1">
    <location>
        <begin position="485"/>
        <end position="505"/>
    </location>
</feature>
<feature type="zinc finger region" description="C2H2-type 10; degenerate" evidence="1">
    <location>
        <begin position="511"/>
        <end position="533"/>
    </location>
</feature>
<feature type="zinc finger region" description="C2H2-type 11" evidence="1">
    <location>
        <begin position="539"/>
        <end position="561"/>
    </location>
</feature>
<feature type="zinc finger region" description="C2H2-type 12" evidence="1">
    <location>
        <begin position="567"/>
        <end position="589"/>
    </location>
</feature>
<feature type="zinc finger region" description="C2H2-type 13" evidence="1">
    <location>
        <begin position="595"/>
        <end position="617"/>
    </location>
</feature>
<feature type="zinc finger region" description="C2H2-type 14" evidence="1">
    <location>
        <begin position="623"/>
        <end position="645"/>
    </location>
</feature>
<feature type="zinc finger region" description="C2H2-type 15" evidence="1">
    <location>
        <begin position="651"/>
        <end position="673"/>
    </location>
</feature>
<feature type="zinc finger region" description="C2H2-type 16" evidence="1">
    <location>
        <begin position="679"/>
        <end position="701"/>
    </location>
</feature>
<feature type="region of interest" description="Required for interaction with RB1" evidence="3">
    <location>
        <begin position="171"/>
        <end position="260"/>
    </location>
</feature>
<feature type="region of interest" description="Interaction with AR" evidence="4">
    <location>
        <begin position="417"/>
        <end position="714"/>
    </location>
</feature>
<feature type="cross-link" description="Glycyl lysine isopeptide (Lys-Gly) (interchain with G-Cter in SUMO2)" evidence="9">
    <location>
        <position position="97"/>
    </location>
</feature>
<feature type="cross-link" description="Glycyl lysine isopeptide (Lys-Gly) (interchain with G-Cter in SUMO2)" evidence="9">
    <location>
        <position position="259"/>
    </location>
</feature>
<feature type="cross-link" description="Glycyl lysine isopeptide (Lys-Gly) (interchain with G-Cter in SUMO2)" evidence="9">
    <location>
        <position position="315"/>
    </location>
</feature>
<feature type="cross-link" description="Glycyl lysine isopeptide (Lys-Gly) (interchain with G-Cter in SUMO2)" evidence="9">
    <location>
        <position position="357"/>
    </location>
</feature>
<feature type="cross-link" description="Glycyl lysine isopeptide (Lys-Gly) (interchain with G-Cter in SUMO2)" evidence="7 8 9">
    <location>
        <position position="534"/>
    </location>
</feature>
<feature type="cross-link" description="Glycyl lysine isopeptide (Lys-Gly) (interchain with G-Cter in SUMO2)" evidence="9">
    <location>
        <position position="537"/>
    </location>
</feature>
<feature type="splice variant" id="VSP_044805" description="In isoform 2." evidence="5">
    <original>EAWRVDDLIERIQENEDKHSRQAACINSKTLTEE</original>
    <variation>AALPAGHVAPAVAAAAAAPGRPGPHRQSRSPPGC</variation>
    <location>
        <begin position="80"/>
        <end position="113"/>
    </location>
</feature>
<feature type="splice variant" id="VSP_044806" description="In isoform 2." evidence="5">
    <location>
        <begin position="114"/>
        <end position="714"/>
    </location>
</feature>
<feature type="sequence variant" id="VAR_038438" description="In dbSNP:rs35352738.">
    <original>G</original>
    <variation>E</variation>
    <location>
        <position position="229"/>
    </location>
</feature>
<feature type="sequence conflict" description="In Ref. 3; BAF85758." evidence="6" ref="3">
    <original>K</original>
    <variation>E</variation>
    <location>
        <position position="273"/>
    </location>
</feature>
<name>RBAK_HUMAN</name>
<comment type="function">
    <text evidence="3 4">May repress E2F-dependent transcription. May promote AR-dependent transcription.</text>
</comment>
<comment type="subunit">
    <text evidence="3 4">Interacts with AR and RB1. May also interact with other nuclear hormone receptors such as NR3C1/GR.</text>
</comment>
<comment type="interaction">
    <interactant intactId="EBI-1210429">
        <id>Q9NYW8</id>
    </interactant>
    <interactant intactId="EBI-745213">
        <id>P29972</id>
        <label>AQP1</label>
    </interactant>
    <organismsDiffer>false</organismsDiffer>
    <experiments>3</experiments>
</comment>
<comment type="interaction">
    <interactant intactId="EBI-1210429">
        <id>Q9NYW8</id>
    </interactant>
    <interactant intactId="EBI-358049">
        <id>Q13895</id>
        <label>BYSL</label>
    </interactant>
    <organismsDiffer>false</organismsDiffer>
    <experiments>3</experiments>
</comment>
<comment type="interaction">
    <interactant intactId="EBI-1210429">
        <id>Q9NYW8</id>
    </interactant>
    <interactant intactId="EBI-11530605">
        <id>Q9H257-2</id>
        <label>CARD9</label>
    </interactant>
    <organismsDiffer>false</organismsDiffer>
    <experiments>3</experiments>
</comment>
<comment type="interaction">
    <interactant intactId="EBI-1210429">
        <id>Q9NYW8</id>
    </interactant>
    <interactant intactId="EBI-10292696">
        <id>Q96Q77</id>
        <label>CIB3</label>
    </interactant>
    <organismsDiffer>false</organismsDiffer>
    <experiments>3</experiments>
</comment>
<comment type="interaction">
    <interactant intactId="EBI-1210429">
        <id>Q9NYW8</id>
    </interactant>
    <interactant intactId="EBI-739773">
        <id>Q9BSW2</id>
        <label>CRACR2A</label>
    </interactant>
    <organismsDiffer>false</organismsDiffer>
    <experiments>3</experiments>
</comment>
<comment type="interaction">
    <interactant intactId="EBI-1210429">
        <id>Q9NYW8</id>
    </interactant>
    <interactant intactId="EBI-743414">
        <id>O95967</id>
        <label>EFEMP2</label>
    </interactant>
    <organismsDiffer>false</organismsDiffer>
    <experiments>3</experiments>
</comment>
<comment type="interaction">
    <interactant intactId="EBI-1210429">
        <id>Q9NYW8</id>
    </interactant>
    <interactant intactId="EBI-750700">
        <id>Q8N9N8</id>
        <label>EIF1AD</label>
    </interactant>
    <organismsDiffer>false</organismsDiffer>
    <experiments>3</experiments>
</comment>
<comment type="interaction">
    <interactant intactId="EBI-1210429">
        <id>Q9NYW8</id>
    </interactant>
    <interactant intactId="EBI-10699759">
        <id>P61328-2</id>
        <label>FGF12</label>
    </interactant>
    <organismsDiffer>false</organismsDiffer>
    <experiments>3</experiments>
</comment>
<comment type="interaction">
    <interactant intactId="EBI-1210429">
        <id>Q9NYW8</id>
    </interactant>
    <interactant intactId="EBI-1052570">
        <id>O95995</id>
        <label>GAS8</label>
    </interactant>
    <organismsDiffer>false</organismsDiffer>
    <experiments>3</experiments>
</comment>
<comment type="interaction">
    <interactant intactId="EBI-1210429">
        <id>Q9NYW8</id>
    </interactant>
    <interactant intactId="EBI-739909">
        <id>Q969R5</id>
        <label>L3MBTL2</label>
    </interactant>
    <organismsDiffer>false</organismsDiffer>
    <experiments>3</experiments>
</comment>
<comment type="interaction">
    <interactant intactId="EBI-1210429">
        <id>Q9NYW8</id>
    </interactant>
    <interactant intactId="EBI-2798728">
        <id>P61968</id>
        <label>LMO4</label>
    </interactant>
    <organismsDiffer>false</organismsDiffer>
    <experiments>3</experiments>
</comment>
<comment type="interaction">
    <interactant intactId="EBI-1210429">
        <id>Q9NYW8</id>
    </interactant>
    <interactant intactId="EBI-739832">
        <id>Q8TBB1</id>
        <label>LNX1</label>
    </interactant>
    <organismsDiffer>false</organismsDiffer>
    <experiments>3</experiments>
</comment>
<comment type="interaction">
    <interactant intactId="EBI-1210429">
        <id>Q9NYW8</id>
    </interactant>
    <interactant intactId="EBI-746778">
        <id>Q96A72</id>
        <label>MAGOHB</label>
    </interactant>
    <organismsDiffer>false</organismsDiffer>
    <experiments>3</experiments>
</comment>
<comment type="interaction">
    <interactant intactId="EBI-1210429">
        <id>Q9NYW8</id>
    </interactant>
    <interactant intactId="EBI-11750983">
        <id>Q9HC98-4</id>
        <label>NEK6</label>
    </interactant>
    <organismsDiffer>false</organismsDiffer>
    <experiments>3</experiments>
</comment>
<comment type="interaction">
    <interactant intactId="EBI-1210429">
        <id>Q9NYW8</id>
    </interactant>
    <interactant intactId="EBI-4280187">
        <id>Q13976-2</id>
        <label>PRKG1</label>
    </interactant>
    <organismsDiffer>false</organismsDiffer>
    <experiments>3</experiments>
</comment>
<comment type="interaction">
    <interactant intactId="EBI-1210429">
        <id>Q9NYW8</id>
    </interactant>
    <interactant intactId="EBI-1567797">
        <id>Q8WWY3</id>
        <label>PRPF31</label>
    </interactant>
    <organismsDiffer>false</organismsDiffer>
    <experiments>3</experiments>
</comment>
<comment type="interaction">
    <interactant intactId="EBI-1210429">
        <id>Q9NYW8</id>
    </interactant>
    <interactant intactId="EBI-748391">
        <id>Q9BWG6</id>
        <label>SCNM1</label>
    </interactant>
    <organismsDiffer>false</organismsDiffer>
    <experiments>3</experiments>
</comment>
<comment type="interaction">
    <interactant intactId="EBI-1210429">
        <id>Q9NYW8</id>
    </interactant>
    <interactant intactId="EBI-12056597">
        <id>Q9UBX3-2</id>
        <label>SLC25A10</label>
    </interactant>
    <organismsDiffer>false</organismsDiffer>
    <experiments>3</experiments>
</comment>
<comment type="interaction">
    <interactant intactId="EBI-1210429">
        <id>Q9NYW8</id>
    </interactant>
    <interactant intactId="EBI-11974855">
        <id>Q9Y4C2-2</id>
        <label>TCAF1</label>
    </interactant>
    <organismsDiffer>false</organismsDiffer>
    <experiments>3</experiments>
</comment>
<comment type="interaction">
    <interactant intactId="EBI-1210429">
        <id>Q9NYW8</id>
    </interactant>
    <interactant intactId="EBI-949753">
        <id>Q63HR2</id>
        <label>TNS2</label>
    </interactant>
    <organismsDiffer>false</organismsDiffer>
    <experiments>3</experiments>
</comment>
<comment type="interaction">
    <interactant intactId="EBI-1210429">
        <id>Q9NYW8</id>
    </interactant>
    <interactant intactId="EBI-725997">
        <id>Q8WV44</id>
        <label>TRIM41</label>
    </interactant>
    <organismsDiffer>false</organismsDiffer>
    <experiments>3</experiments>
</comment>
<comment type="interaction">
    <interactant intactId="EBI-1210429">
        <id>Q9NYW8</id>
    </interactant>
    <interactant intactId="EBI-744794">
        <id>Q9BZW7</id>
        <label>TSGA10</label>
    </interactant>
    <organismsDiffer>false</organismsDiffer>
    <experiments>3</experiments>
</comment>
<comment type="interaction">
    <interactant intactId="EBI-1210429">
        <id>Q9NYW8</id>
    </interactant>
    <interactant intactId="EBI-7877438">
        <id>P42681</id>
        <label>TXK</label>
    </interactant>
    <organismsDiffer>false</organismsDiffer>
    <experiments>3</experiments>
</comment>
<comment type="interaction">
    <interactant intactId="EBI-1210429">
        <id>Q9NYW8</id>
    </interactant>
    <interactant intactId="EBI-1228269">
        <id>P58317</id>
        <label>ZNF121</label>
    </interactant>
    <organismsDiffer>false</organismsDiffer>
    <experiments>3</experiments>
</comment>
<comment type="interaction">
    <interactant intactId="EBI-1210429">
        <id>Q9NYW8</id>
    </interactant>
    <interactant intactId="EBI-373456">
        <id>Q9Y3S2</id>
        <label>ZNF330</label>
    </interactant>
    <organismsDiffer>false</organismsDiffer>
    <experiments>3</experiments>
</comment>
<comment type="interaction">
    <interactant intactId="EBI-1210429">
        <id>Q9NYW8</id>
    </interactant>
    <interactant intactId="EBI-11985915">
        <id>Q5T619</id>
        <label>ZNF648</label>
    </interactant>
    <organismsDiffer>false</organismsDiffer>
    <experiments>3</experiments>
</comment>
<comment type="subcellular location">
    <subcellularLocation>
        <location evidence="3">Nucleus</location>
    </subcellularLocation>
</comment>
<comment type="alternative products">
    <event type="alternative splicing"/>
    <isoform>
        <id>Q9NYW8-1</id>
        <name>1</name>
        <sequence type="displayed"/>
    </isoform>
    <isoform>
        <id>Q9NYW8-2</id>
        <name>2</name>
        <sequence type="described" ref="VSP_044805 VSP_044806"/>
    </isoform>
</comment>
<comment type="tissue specificity">
    <text evidence="3">Expressed in bone, brain, heart, kidney, liver, lung, pancreas and placenta.</text>
</comment>
<comment type="similarity">
    <text evidence="6">Belongs to the krueppel C2H2-type zinc-finger protein family.</text>
</comment>
<reference key="1">
    <citation type="journal article" date="2000" name="J. Biol. Chem.">
        <title>Cloning and characterization of a novel Kruppel-associated box family transcriptional repressor that interacts with the retinoblastoma gene product, RB.</title>
        <authorList>
            <person name="Skapek S.X."/>
            <person name="Jansen D."/>
            <person name="Wei T.-F."/>
            <person name="McDermott T."/>
            <person name="Huang W."/>
            <person name="Olson E.N."/>
            <person name="Lee E.Y.-H.P."/>
        </authorList>
    </citation>
    <scope>NUCLEOTIDE SEQUENCE [MRNA] (ISOFORM 1)</scope>
    <scope>FUNCTION</scope>
    <scope>INTERACTION WITH RB1</scope>
    <scope>SUBCELLULAR LOCATION</scope>
    <scope>TISSUE SPECIFICITY</scope>
</reference>
<reference key="2">
    <citation type="journal article" date="1996" name="Genome Res.">
        <title>Normalization and subtraction: two approaches to facilitate gene discovery.</title>
        <authorList>
            <person name="Bonaldo M.F."/>
            <person name="Lennon G."/>
            <person name="Soares M.B."/>
        </authorList>
    </citation>
    <scope>NUCLEOTIDE SEQUENCE [LARGE SCALE MRNA] (ISOFORM 2)</scope>
</reference>
<reference key="3">
    <citation type="journal article" date="2004" name="Nat. Genet.">
        <title>Complete sequencing and characterization of 21,243 full-length human cDNAs.</title>
        <authorList>
            <person name="Ota T."/>
            <person name="Suzuki Y."/>
            <person name="Nishikawa T."/>
            <person name="Otsuki T."/>
            <person name="Sugiyama T."/>
            <person name="Irie R."/>
            <person name="Wakamatsu A."/>
            <person name="Hayashi K."/>
            <person name="Sato H."/>
            <person name="Nagai K."/>
            <person name="Kimura K."/>
            <person name="Makita H."/>
            <person name="Sekine M."/>
            <person name="Obayashi M."/>
            <person name="Nishi T."/>
            <person name="Shibahara T."/>
            <person name="Tanaka T."/>
            <person name="Ishii S."/>
            <person name="Yamamoto J."/>
            <person name="Saito K."/>
            <person name="Kawai Y."/>
            <person name="Isono Y."/>
            <person name="Nakamura Y."/>
            <person name="Nagahari K."/>
            <person name="Murakami K."/>
            <person name="Yasuda T."/>
            <person name="Iwayanagi T."/>
            <person name="Wagatsuma M."/>
            <person name="Shiratori A."/>
            <person name="Sudo H."/>
            <person name="Hosoiri T."/>
            <person name="Kaku Y."/>
            <person name="Kodaira H."/>
            <person name="Kondo H."/>
            <person name="Sugawara M."/>
            <person name="Takahashi M."/>
            <person name="Kanda K."/>
            <person name="Yokoi T."/>
            <person name="Furuya T."/>
            <person name="Kikkawa E."/>
            <person name="Omura Y."/>
            <person name="Abe K."/>
            <person name="Kamihara K."/>
            <person name="Katsuta N."/>
            <person name="Sato K."/>
            <person name="Tanikawa M."/>
            <person name="Yamazaki M."/>
            <person name="Ninomiya K."/>
            <person name="Ishibashi T."/>
            <person name="Yamashita H."/>
            <person name="Murakawa K."/>
            <person name="Fujimori K."/>
            <person name="Tanai H."/>
            <person name="Kimata M."/>
            <person name="Watanabe M."/>
            <person name="Hiraoka S."/>
            <person name="Chiba Y."/>
            <person name="Ishida S."/>
            <person name="Ono Y."/>
            <person name="Takiguchi S."/>
            <person name="Watanabe S."/>
            <person name="Yosida M."/>
            <person name="Hotuta T."/>
            <person name="Kusano J."/>
            <person name="Kanehori K."/>
            <person name="Takahashi-Fujii A."/>
            <person name="Hara H."/>
            <person name="Tanase T.-O."/>
            <person name="Nomura Y."/>
            <person name="Togiya S."/>
            <person name="Komai F."/>
            <person name="Hara R."/>
            <person name="Takeuchi K."/>
            <person name="Arita M."/>
            <person name="Imose N."/>
            <person name="Musashino K."/>
            <person name="Yuuki H."/>
            <person name="Oshima A."/>
            <person name="Sasaki N."/>
            <person name="Aotsuka S."/>
            <person name="Yoshikawa Y."/>
            <person name="Matsunawa H."/>
            <person name="Ichihara T."/>
            <person name="Shiohata N."/>
            <person name="Sano S."/>
            <person name="Moriya S."/>
            <person name="Momiyama H."/>
            <person name="Satoh N."/>
            <person name="Takami S."/>
            <person name="Terashima Y."/>
            <person name="Suzuki O."/>
            <person name="Nakagawa S."/>
            <person name="Senoh A."/>
            <person name="Mizoguchi H."/>
            <person name="Goto Y."/>
            <person name="Shimizu F."/>
            <person name="Wakebe H."/>
            <person name="Hishigaki H."/>
            <person name="Watanabe T."/>
            <person name="Sugiyama A."/>
            <person name="Takemoto M."/>
            <person name="Kawakami B."/>
            <person name="Yamazaki M."/>
            <person name="Watanabe K."/>
            <person name="Kumagai A."/>
            <person name="Itakura S."/>
            <person name="Fukuzumi Y."/>
            <person name="Fujimori Y."/>
            <person name="Komiyama M."/>
            <person name="Tashiro H."/>
            <person name="Tanigami A."/>
            <person name="Fujiwara T."/>
            <person name="Ono T."/>
            <person name="Yamada K."/>
            <person name="Fujii Y."/>
            <person name="Ozaki K."/>
            <person name="Hirao M."/>
            <person name="Ohmori Y."/>
            <person name="Kawabata A."/>
            <person name="Hikiji T."/>
            <person name="Kobatake N."/>
            <person name="Inagaki H."/>
            <person name="Ikema Y."/>
            <person name="Okamoto S."/>
            <person name="Okitani R."/>
            <person name="Kawakami T."/>
            <person name="Noguchi S."/>
            <person name="Itoh T."/>
            <person name="Shigeta K."/>
            <person name="Senba T."/>
            <person name="Matsumura K."/>
            <person name="Nakajima Y."/>
            <person name="Mizuno T."/>
            <person name="Morinaga M."/>
            <person name="Sasaki M."/>
            <person name="Togashi T."/>
            <person name="Oyama M."/>
            <person name="Hata H."/>
            <person name="Watanabe M."/>
            <person name="Komatsu T."/>
            <person name="Mizushima-Sugano J."/>
            <person name="Satoh T."/>
            <person name="Shirai Y."/>
            <person name="Takahashi Y."/>
            <person name="Nakagawa K."/>
            <person name="Okumura K."/>
            <person name="Nagase T."/>
            <person name="Nomura N."/>
            <person name="Kikuchi H."/>
            <person name="Masuho Y."/>
            <person name="Yamashita R."/>
            <person name="Nakai K."/>
            <person name="Yada T."/>
            <person name="Nakamura Y."/>
            <person name="Ohara O."/>
            <person name="Isogai T."/>
            <person name="Sugano S."/>
        </authorList>
    </citation>
    <scope>NUCLEOTIDE SEQUENCE [LARGE SCALE MRNA] (ISOFORM 1)</scope>
    <source>
        <tissue>Uterus</tissue>
    </source>
</reference>
<reference key="4">
    <citation type="journal article" date="2003" name="Nature">
        <title>The DNA sequence of human chromosome 7.</title>
        <authorList>
            <person name="Hillier L.W."/>
            <person name="Fulton R.S."/>
            <person name="Fulton L.A."/>
            <person name="Graves T.A."/>
            <person name="Pepin K.H."/>
            <person name="Wagner-McPherson C."/>
            <person name="Layman D."/>
            <person name="Maas J."/>
            <person name="Jaeger S."/>
            <person name="Walker R."/>
            <person name="Wylie K."/>
            <person name="Sekhon M."/>
            <person name="Becker M.C."/>
            <person name="O'Laughlin M.D."/>
            <person name="Schaller M.E."/>
            <person name="Fewell G.A."/>
            <person name="Delehaunty K.D."/>
            <person name="Miner T.L."/>
            <person name="Nash W.E."/>
            <person name="Cordes M."/>
            <person name="Du H."/>
            <person name="Sun H."/>
            <person name="Edwards J."/>
            <person name="Bradshaw-Cordum H."/>
            <person name="Ali J."/>
            <person name="Andrews S."/>
            <person name="Isak A."/>
            <person name="Vanbrunt A."/>
            <person name="Nguyen C."/>
            <person name="Du F."/>
            <person name="Lamar B."/>
            <person name="Courtney L."/>
            <person name="Kalicki J."/>
            <person name="Ozersky P."/>
            <person name="Bielicki L."/>
            <person name="Scott K."/>
            <person name="Holmes A."/>
            <person name="Harkins R."/>
            <person name="Harris A."/>
            <person name="Strong C.M."/>
            <person name="Hou S."/>
            <person name="Tomlinson C."/>
            <person name="Dauphin-Kohlberg S."/>
            <person name="Kozlowicz-Reilly A."/>
            <person name="Leonard S."/>
            <person name="Rohlfing T."/>
            <person name="Rock S.M."/>
            <person name="Tin-Wollam A.-M."/>
            <person name="Abbott A."/>
            <person name="Minx P."/>
            <person name="Maupin R."/>
            <person name="Strowmatt C."/>
            <person name="Latreille P."/>
            <person name="Miller N."/>
            <person name="Johnson D."/>
            <person name="Murray J."/>
            <person name="Woessner J.P."/>
            <person name="Wendl M.C."/>
            <person name="Yang S.-P."/>
            <person name="Schultz B.R."/>
            <person name="Wallis J.W."/>
            <person name="Spieth J."/>
            <person name="Bieri T.A."/>
            <person name="Nelson J.O."/>
            <person name="Berkowicz N."/>
            <person name="Wohldmann P.E."/>
            <person name="Cook L.L."/>
            <person name="Hickenbotham M.T."/>
            <person name="Eldred J."/>
            <person name="Williams D."/>
            <person name="Bedell J.A."/>
            <person name="Mardis E.R."/>
            <person name="Clifton S.W."/>
            <person name="Chissoe S.L."/>
            <person name="Marra M.A."/>
            <person name="Raymond C."/>
            <person name="Haugen E."/>
            <person name="Gillett W."/>
            <person name="Zhou Y."/>
            <person name="James R."/>
            <person name="Phelps K."/>
            <person name="Iadanoto S."/>
            <person name="Bubb K."/>
            <person name="Simms E."/>
            <person name="Levy R."/>
            <person name="Clendenning J."/>
            <person name="Kaul R."/>
            <person name="Kent W.J."/>
            <person name="Furey T.S."/>
            <person name="Baertsch R.A."/>
            <person name="Brent M.R."/>
            <person name="Keibler E."/>
            <person name="Flicek P."/>
            <person name="Bork P."/>
            <person name="Suyama M."/>
            <person name="Bailey J.A."/>
            <person name="Portnoy M.E."/>
            <person name="Torrents D."/>
            <person name="Chinwalla A.T."/>
            <person name="Gish W.R."/>
            <person name="Eddy S.R."/>
            <person name="McPherson J.D."/>
            <person name="Olson M.V."/>
            <person name="Eichler E.E."/>
            <person name="Green E.D."/>
            <person name="Waterston R.H."/>
            <person name="Wilson R.K."/>
        </authorList>
    </citation>
    <scope>NUCLEOTIDE SEQUENCE [LARGE SCALE GENOMIC DNA]</scope>
</reference>
<reference key="5">
    <citation type="submission" date="2005-07" db="EMBL/GenBank/DDBJ databases">
        <authorList>
            <person name="Mural R.J."/>
            <person name="Istrail S."/>
            <person name="Sutton G.G."/>
            <person name="Florea L."/>
            <person name="Halpern A.L."/>
            <person name="Mobarry C.M."/>
            <person name="Lippert R."/>
            <person name="Walenz B."/>
            <person name="Shatkay H."/>
            <person name="Dew I."/>
            <person name="Miller J.R."/>
            <person name="Flanigan M.J."/>
            <person name="Edwards N.J."/>
            <person name="Bolanos R."/>
            <person name="Fasulo D."/>
            <person name="Halldorsson B.V."/>
            <person name="Hannenhalli S."/>
            <person name="Turner R."/>
            <person name="Yooseph S."/>
            <person name="Lu F."/>
            <person name="Nusskern D.R."/>
            <person name="Shue B.C."/>
            <person name="Zheng X.H."/>
            <person name="Zhong F."/>
            <person name="Delcher A.L."/>
            <person name="Huson D.H."/>
            <person name="Kravitz S.A."/>
            <person name="Mouchard L."/>
            <person name="Reinert K."/>
            <person name="Remington K.A."/>
            <person name="Clark A.G."/>
            <person name="Waterman M.S."/>
            <person name="Eichler E.E."/>
            <person name="Adams M.D."/>
            <person name="Hunkapiller M.W."/>
            <person name="Myers E.W."/>
            <person name="Venter J.C."/>
        </authorList>
    </citation>
    <scope>NUCLEOTIDE SEQUENCE [LARGE SCALE GENOMIC DNA]</scope>
</reference>
<reference key="6">
    <citation type="journal article" date="2004" name="Genome Res.">
        <title>The status, quality, and expansion of the NIH full-length cDNA project: the Mammalian Gene Collection (MGC).</title>
        <authorList>
            <consortium name="The MGC Project Team"/>
        </authorList>
    </citation>
    <scope>NUCLEOTIDE SEQUENCE [LARGE SCALE MRNA] (ISOFORM 1)</scope>
    <source>
        <tissue>Brain</tissue>
        <tissue>Testis</tissue>
    </source>
</reference>
<reference key="7">
    <citation type="journal article" date="2003" name="J. Mol. Endocrinol.">
        <title>The retinoblastoma protein-associated transcription repressor RBaK interacts with the androgen receptor and enhances its transcriptional activity.</title>
        <authorList>
            <person name="Hofman K."/>
            <person name="Swinnen J.V."/>
            <person name="Claessens F."/>
            <person name="Verhoeven G."/>
            <person name="Heyns W."/>
        </authorList>
    </citation>
    <scope>FUNCTION</scope>
    <scope>INTERACTION WITH AR</scope>
</reference>
<reference key="8">
    <citation type="journal article" date="2014" name="Nat. Struct. Mol. Biol.">
        <title>Uncovering global SUMOylation signaling networks in a site-specific manner.</title>
        <authorList>
            <person name="Hendriks I.A."/>
            <person name="D'Souza R.C."/>
            <person name="Yang B."/>
            <person name="Verlaan-de Vries M."/>
            <person name="Mann M."/>
            <person name="Vertegaal A.C."/>
        </authorList>
    </citation>
    <scope>SUMOYLATION [LARGE SCALE ANALYSIS] AT LYS-534</scope>
    <scope>IDENTIFICATION BY MASS SPECTROMETRY [LARGE SCALE ANALYSIS]</scope>
</reference>
<reference key="9">
    <citation type="journal article" date="2015" name="Mol. Cell. Proteomics">
        <title>System-wide analysis of SUMOylation dynamics in response to replication stress reveals novel small ubiquitin-like modified target proteins and acceptor lysines relevant for genome stability.</title>
        <authorList>
            <person name="Xiao Z."/>
            <person name="Chang J.G."/>
            <person name="Hendriks I.A."/>
            <person name="Sigurdsson J.O."/>
            <person name="Olsen J.V."/>
            <person name="Vertegaal A.C."/>
        </authorList>
    </citation>
    <scope>SUMOYLATION [LARGE SCALE ANALYSIS] AT LYS-534</scope>
    <scope>IDENTIFICATION BY MASS SPECTROMETRY [LARGE SCALE ANALYSIS]</scope>
</reference>
<reference key="10">
    <citation type="journal article" date="2017" name="Nat. Struct. Mol. Biol.">
        <title>Site-specific mapping of the human SUMO proteome reveals co-modification with phosphorylation.</title>
        <authorList>
            <person name="Hendriks I.A."/>
            <person name="Lyon D."/>
            <person name="Young C."/>
            <person name="Jensen L.J."/>
            <person name="Vertegaal A.C."/>
            <person name="Nielsen M.L."/>
        </authorList>
    </citation>
    <scope>SUMOYLATION [LARGE SCALE ANALYSIS] AT LYS-97; LYS-259; LYS-315; LYS-357; LYS-534 AND LYS-537</scope>
    <scope>IDENTIFICATION BY MASS SPECTROMETRY [LARGE SCALE ANALYSIS]</scope>
</reference>
<accession>Q9NYW8</accession>
<accession>A6NDF2</accession>
<accession>A8KAK4</accession>
<accession>B2RN44</accession>
<accession>B9EGS1</accession>
<accession>F8W6M7</accession>
<organism>
    <name type="scientific">Homo sapiens</name>
    <name type="common">Human</name>
    <dbReference type="NCBI Taxonomy" id="9606"/>
    <lineage>
        <taxon>Eukaryota</taxon>
        <taxon>Metazoa</taxon>
        <taxon>Chordata</taxon>
        <taxon>Craniata</taxon>
        <taxon>Vertebrata</taxon>
        <taxon>Euteleostomi</taxon>
        <taxon>Mammalia</taxon>
        <taxon>Eutheria</taxon>
        <taxon>Euarchontoglires</taxon>
        <taxon>Primates</taxon>
        <taxon>Haplorrhini</taxon>
        <taxon>Catarrhini</taxon>
        <taxon>Hominidae</taxon>
        <taxon>Homo</taxon>
    </lineage>
</organism>
<dbReference type="EMBL" id="AF226869">
    <property type="protein sequence ID" value="AAF43389.1"/>
    <property type="molecule type" value="mRNA"/>
</dbReference>
<dbReference type="EMBL" id="BM929719">
    <property type="status" value="NOT_ANNOTATED_CDS"/>
    <property type="molecule type" value="mRNA"/>
</dbReference>
<dbReference type="EMBL" id="AK293069">
    <property type="protein sequence ID" value="BAF85758.1"/>
    <property type="molecule type" value="mRNA"/>
</dbReference>
<dbReference type="EMBL" id="AC092032">
    <property type="protein sequence ID" value="AAQ93364.1"/>
    <property type="molecule type" value="Genomic_DNA"/>
</dbReference>
<dbReference type="EMBL" id="AC008167">
    <property type="status" value="NOT_ANNOTATED_CDS"/>
    <property type="molecule type" value="Genomic_DNA"/>
</dbReference>
<dbReference type="EMBL" id="CH471144">
    <property type="protein sequence ID" value="EAW87321.1"/>
    <property type="molecule type" value="Genomic_DNA"/>
</dbReference>
<dbReference type="EMBL" id="BC136675">
    <property type="protein sequence ID" value="AAI36676.1"/>
    <property type="molecule type" value="mRNA"/>
</dbReference>
<dbReference type="EMBL" id="BC136676">
    <property type="protein sequence ID" value="AAI36677.1"/>
    <property type="molecule type" value="mRNA"/>
</dbReference>
<dbReference type="CCDS" id="CCDS5337.1">
    <molecule id="Q9NYW8-1"/>
</dbReference>
<dbReference type="RefSeq" id="NP_001191385.1">
    <molecule id="Q9NYW8-1"/>
    <property type="nucleotide sequence ID" value="NM_001204456.2"/>
</dbReference>
<dbReference type="RefSeq" id="NP_066986.1">
    <molecule id="Q9NYW8-1"/>
    <property type="nucleotide sequence ID" value="NM_021163.4"/>
</dbReference>
<dbReference type="SMR" id="Q9NYW8"/>
<dbReference type="BioGRID" id="121759">
    <property type="interactions" value="59"/>
</dbReference>
<dbReference type="BioGRID" id="1529617">
    <property type="interactions" value="1"/>
</dbReference>
<dbReference type="CORUM" id="Q9NYW8"/>
<dbReference type="DIP" id="DIP-39336N"/>
<dbReference type="FunCoup" id="Q9NYW8">
    <property type="interactions" value="623"/>
</dbReference>
<dbReference type="IntAct" id="Q9NYW8">
    <property type="interactions" value="57"/>
</dbReference>
<dbReference type="MINT" id="Q9NYW8"/>
<dbReference type="STRING" id="9606.ENSP00000380120"/>
<dbReference type="GlyGen" id="Q9NYW8">
    <property type="glycosylation" value="1 site, 1 N-linked glycan (1 site)"/>
</dbReference>
<dbReference type="iPTMnet" id="Q9NYW8"/>
<dbReference type="PhosphoSitePlus" id="Q9NYW8"/>
<dbReference type="SwissPalm" id="Q9NYW8"/>
<dbReference type="BioMuta" id="RBAK"/>
<dbReference type="DMDM" id="74761820"/>
<dbReference type="jPOST" id="Q9NYW8"/>
<dbReference type="MassIVE" id="Q9NYW8"/>
<dbReference type="PaxDb" id="9606-ENSP00000380120"/>
<dbReference type="PeptideAtlas" id="Q9NYW8"/>
<dbReference type="ProteomicsDB" id="29813"/>
<dbReference type="ProteomicsDB" id="83294">
    <molecule id="Q9NYW8-1"/>
</dbReference>
<dbReference type="Pumba" id="Q9NYW8"/>
<dbReference type="Antibodypedia" id="11262">
    <property type="antibodies" value="150 antibodies from 27 providers"/>
</dbReference>
<dbReference type="DNASU" id="57786"/>
<dbReference type="Ensembl" id="ENST00000353796.7">
    <molecule id="Q9NYW8-1"/>
    <property type="protein sequence ID" value="ENSP00000275423.4"/>
    <property type="gene ID" value="ENSG00000146587.18"/>
</dbReference>
<dbReference type="Ensembl" id="ENST00000396912.2">
    <molecule id="Q9NYW8-1"/>
    <property type="protein sequence ID" value="ENSP00000380120.1"/>
    <property type="gene ID" value="ENSG00000146587.18"/>
</dbReference>
<dbReference type="GeneID" id="57786"/>
<dbReference type="KEGG" id="hsa:57786"/>
<dbReference type="MANE-Select" id="ENST00000396912.2">
    <property type="protein sequence ID" value="ENSP00000380120.1"/>
    <property type="RefSeq nucleotide sequence ID" value="NM_021163.4"/>
    <property type="RefSeq protein sequence ID" value="NP_066986.1"/>
</dbReference>
<dbReference type="UCSC" id="uc003sns.1">
    <molecule id="Q9NYW8-1"/>
    <property type="organism name" value="human"/>
</dbReference>
<dbReference type="AGR" id="HGNC:17680"/>
<dbReference type="CTD" id="57786"/>
<dbReference type="DisGeNET" id="57786"/>
<dbReference type="GeneCards" id="RBAK"/>
<dbReference type="HGNC" id="HGNC:17680">
    <property type="gene designation" value="RBAK"/>
</dbReference>
<dbReference type="HPA" id="ENSG00000146587">
    <property type="expression patterns" value="Low tissue specificity"/>
</dbReference>
<dbReference type="MalaCards" id="RBAK"/>
<dbReference type="MIM" id="608191">
    <property type="type" value="gene"/>
</dbReference>
<dbReference type="neXtProt" id="NX_Q9NYW8"/>
<dbReference type="OpenTargets" id="ENSG00000146587"/>
<dbReference type="PharmGKB" id="PA162400745"/>
<dbReference type="VEuPathDB" id="HostDB:ENSG00000146587"/>
<dbReference type="eggNOG" id="KOG1721">
    <property type="taxonomic scope" value="Eukaryota"/>
</dbReference>
<dbReference type="GeneTree" id="ENSGT00940000154303"/>
<dbReference type="HOGENOM" id="CLU_002678_0_12_1"/>
<dbReference type="InParanoid" id="Q9NYW8"/>
<dbReference type="OMA" id="LENHHRT"/>
<dbReference type="OrthoDB" id="9411774at2759"/>
<dbReference type="PAN-GO" id="Q9NYW8">
    <property type="GO annotations" value="4 GO annotations based on evolutionary models"/>
</dbReference>
<dbReference type="PhylomeDB" id="Q9NYW8"/>
<dbReference type="TreeFam" id="TF350803"/>
<dbReference type="PathwayCommons" id="Q9NYW8"/>
<dbReference type="SignaLink" id="Q9NYW8"/>
<dbReference type="BioGRID-ORCS" id="57786">
    <property type="hits" value="17 hits in 1162 CRISPR screens"/>
</dbReference>
<dbReference type="ChiTaRS" id="RBAK">
    <property type="organism name" value="human"/>
</dbReference>
<dbReference type="GenomeRNAi" id="57786"/>
<dbReference type="Pharos" id="Q9NYW8">
    <property type="development level" value="Tbio"/>
</dbReference>
<dbReference type="PRO" id="PR:Q9NYW8"/>
<dbReference type="Proteomes" id="UP000005640">
    <property type="component" value="Chromosome 7"/>
</dbReference>
<dbReference type="RNAct" id="Q9NYW8">
    <property type="molecule type" value="protein"/>
</dbReference>
<dbReference type="Bgee" id="ENSG00000146587">
    <property type="expression patterns" value="Expressed in epithelial cell of pancreas and 190 other cell types or tissues"/>
</dbReference>
<dbReference type="GO" id="GO:0005654">
    <property type="term" value="C:nucleoplasm"/>
    <property type="evidence" value="ECO:0000314"/>
    <property type="project" value="HPA"/>
</dbReference>
<dbReference type="GO" id="GO:0005634">
    <property type="term" value="C:nucleus"/>
    <property type="evidence" value="ECO:0000304"/>
    <property type="project" value="UniProtKB"/>
</dbReference>
<dbReference type="GO" id="GO:0000981">
    <property type="term" value="F:DNA-binding transcription factor activity, RNA polymerase II-specific"/>
    <property type="evidence" value="ECO:0000318"/>
    <property type="project" value="GO_Central"/>
</dbReference>
<dbReference type="GO" id="GO:0000978">
    <property type="term" value="F:RNA polymerase II cis-regulatory region sequence-specific DNA binding"/>
    <property type="evidence" value="ECO:0000318"/>
    <property type="project" value="GO_Central"/>
</dbReference>
<dbReference type="GO" id="GO:0008270">
    <property type="term" value="F:zinc ion binding"/>
    <property type="evidence" value="ECO:0000303"/>
    <property type="project" value="UniProtKB"/>
</dbReference>
<dbReference type="GO" id="GO:0045892">
    <property type="term" value="P:negative regulation of DNA-templated transcription"/>
    <property type="evidence" value="ECO:0000304"/>
    <property type="project" value="UniProtKB"/>
</dbReference>
<dbReference type="GO" id="GO:0006355">
    <property type="term" value="P:regulation of DNA-templated transcription"/>
    <property type="evidence" value="ECO:0000304"/>
    <property type="project" value="UniProtKB"/>
</dbReference>
<dbReference type="GO" id="GO:0006357">
    <property type="term" value="P:regulation of transcription by RNA polymerase II"/>
    <property type="evidence" value="ECO:0000318"/>
    <property type="project" value="GO_Central"/>
</dbReference>
<dbReference type="CDD" id="cd07765">
    <property type="entry name" value="KRAB_A-box"/>
    <property type="match status" value="1"/>
</dbReference>
<dbReference type="FunFam" id="3.30.160.60:FF:002063">
    <property type="entry name" value="RB associated KRAB zinc finger"/>
    <property type="match status" value="1"/>
</dbReference>
<dbReference type="FunFam" id="3.30.160.60:FF:000012">
    <property type="entry name" value="RB-associated KRAB zinc finger protein-like"/>
    <property type="match status" value="3"/>
</dbReference>
<dbReference type="FunFam" id="3.30.160.60:FF:000666">
    <property type="entry name" value="RB-associated KRAB zinc finger protein-like"/>
    <property type="match status" value="1"/>
</dbReference>
<dbReference type="FunFam" id="3.30.160.60:FF:001354">
    <property type="entry name" value="RB-associated KRAB zinc finger protein-like"/>
    <property type="match status" value="1"/>
</dbReference>
<dbReference type="FunFam" id="3.30.160.60:FF:002084">
    <property type="entry name" value="RB-associated KRAB zinc finger protein-like"/>
    <property type="match status" value="1"/>
</dbReference>
<dbReference type="FunFam" id="3.30.160.60:FF:000001">
    <property type="entry name" value="Zinc finger protein 1 homolog"/>
    <property type="match status" value="1"/>
</dbReference>
<dbReference type="FunFam" id="3.30.160.60:FF:000478">
    <property type="entry name" value="Zinc finger protein 133"/>
    <property type="match status" value="1"/>
</dbReference>
<dbReference type="FunFam" id="3.30.160.60:FF:000295">
    <property type="entry name" value="zinc finger protein 19"/>
    <property type="match status" value="1"/>
</dbReference>
<dbReference type="FunFam" id="3.30.160.60:FF:000003">
    <property type="entry name" value="Zinc finger protein 3 homolog"/>
    <property type="match status" value="1"/>
</dbReference>
<dbReference type="FunFam" id="3.30.160.60:FF:002343">
    <property type="entry name" value="Zinc finger protein 33A"/>
    <property type="match status" value="1"/>
</dbReference>
<dbReference type="FunFam" id="3.30.160.60:FF:000060">
    <property type="entry name" value="zinc finger protein 436"/>
    <property type="match status" value="1"/>
</dbReference>
<dbReference type="FunFam" id="3.30.160.60:FF:000290">
    <property type="entry name" value="Zinc finger protein 697 isoform X1"/>
    <property type="match status" value="1"/>
</dbReference>
<dbReference type="FunFam" id="3.30.160.60:FF:001157">
    <property type="entry name" value="Zinc finger protein 793"/>
    <property type="match status" value="1"/>
</dbReference>
<dbReference type="Gene3D" id="6.10.140.140">
    <property type="match status" value="1"/>
</dbReference>
<dbReference type="Gene3D" id="3.30.160.60">
    <property type="entry name" value="Classic Zinc Finger"/>
    <property type="match status" value="15"/>
</dbReference>
<dbReference type="InterPro" id="IPR001909">
    <property type="entry name" value="KRAB"/>
</dbReference>
<dbReference type="InterPro" id="IPR036051">
    <property type="entry name" value="KRAB_dom_sf"/>
</dbReference>
<dbReference type="InterPro" id="IPR036236">
    <property type="entry name" value="Znf_C2H2_sf"/>
</dbReference>
<dbReference type="InterPro" id="IPR013087">
    <property type="entry name" value="Znf_C2H2_type"/>
</dbReference>
<dbReference type="PANTHER" id="PTHR23226:SF397">
    <property type="entry name" value="C2H2-TYPE DOMAIN-CONTAINING PROTEIN"/>
    <property type="match status" value="1"/>
</dbReference>
<dbReference type="PANTHER" id="PTHR23226">
    <property type="entry name" value="ZINC FINGER AND SCAN DOMAIN-CONTAINING"/>
    <property type="match status" value="1"/>
</dbReference>
<dbReference type="Pfam" id="PF01352">
    <property type="entry name" value="KRAB"/>
    <property type="match status" value="1"/>
</dbReference>
<dbReference type="Pfam" id="PF00096">
    <property type="entry name" value="zf-C2H2"/>
    <property type="match status" value="14"/>
</dbReference>
<dbReference type="SMART" id="SM00349">
    <property type="entry name" value="KRAB"/>
    <property type="match status" value="1"/>
</dbReference>
<dbReference type="SMART" id="SM00355">
    <property type="entry name" value="ZnF_C2H2"/>
    <property type="match status" value="16"/>
</dbReference>
<dbReference type="SUPFAM" id="SSF57667">
    <property type="entry name" value="beta-beta-alpha zinc fingers"/>
    <property type="match status" value="10"/>
</dbReference>
<dbReference type="SUPFAM" id="SSF109640">
    <property type="entry name" value="KRAB domain (Kruppel-associated box)"/>
    <property type="match status" value="1"/>
</dbReference>
<dbReference type="PROSITE" id="PS50805">
    <property type="entry name" value="KRAB"/>
    <property type="match status" value="1"/>
</dbReference>
<dbReference type="PROSITE" id="PS00028">
    <property type="entry name" value="ZINC_FINGER_C2H2_1"/>
    <property type="match status" value="14"/>
</dbReference>
<dbReference type="PROSITE" id="PS50157">
    <property type="entry name" value="ZINC_FINGER_C2H2_2"/>
    <property type="match status" value="15"/>
</dbReference>
<sequence length="714" mass="82995">MNTLQGPVSFKDVAVDFTQEEWQQLDPDEKITYRDVMLENYSHLVSVGYDTTKPNVIIKLEQGEEPWIMGGEFPCQHSPEAWRVDDLIERIQENEDKHSRQAACINSKTLTEEKENTFSQIYMETSLVPSSIIAHNCVSCGKNLESISQLISSDGSYARTKPDECNECGKTYHGEKMCEFNQNGDTYSHNEENILQKISILEKPFEYNECMEALDNEAVFIAHKRAYIGEKPYEWNDSGPDFIQMSNFNAYQRSQMEMKPFECSECGKSFCKKSKFIIHQRAHTGEKPYECNVCGKSFSQKGTLTVHRRSHLEEKPYKCNECGKTFCQKLHLTQHLRTHSGEKPYECSECGKTFCQKTHLTLHQRNHSGERPYPCNECGKSFSRKSALSDHQRTHTGEKLYKCNECGKSYYRKSTLITHQRTHTGEKPYQCSECGKFFSRVSYLTIHYRSHLEEKPYECNECGKTFNLNSAFIRHRKVHTEEKSHECSECGKFSQLYLTDHHTAHLEEKPYECNECGKTFLVNSAFDGHQPLPKGEKSYECNVCGKLFNELSYYTEHYRSHSEEKPYGCSECGKTFSHNSSLFRHQRVHTGEKPYECYECGKFFSQKSYLTIHHRIHSGEKPYECSKCGKVFSRMSNLTVHYRSHSGEKPYECNECGKVFSQKSYLTVHYRTHSGEKPYECNECGKKFHHRSAFNSHQRIHRRGNMNVLDVENL</sequence>